<proteinExistence type="evidence at transcript level"/>
<name>POXC_PENO1</name>
<keyword id="KW-0349">Heme</keyword>
<keyword id="KW-0408">Iron</keyword>
<keyword id="KW-0472">Membrane</keyword>
<keyword id="KW-0479">Metal-binding</keyword>
<keyword id="KW-0503">Monooxygenase</keyword>
<keyword id="KW-0560">Oxidoreductase</keyword>
<keyword id="KW-1185">Reference proteome</keyword>
<keyword id="KW-0812">Transmembrane</keyword>
<keyword id="KW-1133">Transmembrane helix</keyword>
<dbReference type="EC" id="1.-.-.-" evidence="6"/>
<dbReference type="EMBL" id="KB644411">
    <property type="protein sequence ID" value="EPS29067.1"/>
    <property type="molecule type" value="Genomic_DNA"/>
</dbReference>
<dbReference type="SMR" id="S8B3I0"/>
<dbReference type="STRING" id="933388.S8B3I0"/>
<dbReference type="eggNOG" id="KOG0158">
    <property type="taxonomic scope" value="Eukaryota"/>
</dbReference>
<dbReference type="HOGENOM" id="CLU_001570_14_11_1"/>
<dbReference type="OrthoDB" id="1470350at2759"/>
<dbReference type="PhylomeDB" id="S8B3I0"/>
<dbReference type="Proteomes" id="UP000019376">
    <property type="component" value="Unassembled WGS sequence"/>
</dbReference>
<dbReference type="GO" id="GO:0016020">
    <property type="term" value="C:membrane"/>
    <property type="evidence" value="ECO:0007669"/>
    <property type="project" value="UniProtKB-SubCell"/>
</dbReference>
<dbReference type="GO" id="GO:0020037">
    <property type="term" value="F:heme binding"/>
    <property type="evidence" value="ECO:0007669"/>
    <property type="project" value="InterPro"/>
</dbReference>
<dbReference type="GO" id="GO:0005506">
    <property type="term" value="F:iron ion binding"/>
    <property type="evidence" value="ECO:0007669"/>
    <property type="project" value="InterPro"/>
</dbReference>
<dbReference type="GO" id="GO:0004497">
    <property type="term" value="F:monooxygenase activity"/>
    <property type="evidence" value="ECO:0007669"/>
    <property type="project" value="UniProtKB-KW"/>
</dbReference>
<dbReference type="GO" id="GO:0016705">
    <property type="term" value="F:oxidoreductase activity, acting on paired donors, with incorporation or reduction of molecular oxygen"/>
    <property type="evidence" value="ECO:0007669"/>
    <property type="project" value="InterPro"/>
</dbReference>
<dbReference type="GO" id="GO:0043386">
    <property type="term" value="P:mycotoxin biosynthetic process"/>
    <property type="evidence" value="ECO:0007669"/>
    <property type="project" value="UniProtKB-ARBA"/>
</dbReference>
<dbReference type="CDD" id="cd11058">
    <property type="entry name" value="CYP60B-like"/>
    <property type="match status" value="1"/>
</dbReference>
<dbReference type="Gene3D" id="1.10.630.10">
    <property type="entry name" value="Cytochrome P450"/>
    <property type="match status" value="1"/>
</dbReference>
<dbReference type="InterPro" id="IPR001128">
    <property type="entry name" value="Cyt_P450"/>
</dbReference>
<dbReference type="InterPro" id="IPR017972">
    <property type="entry name" value="Cyt_P450_CS"/>
</dbReference>
<dbReference type="InterPro" id="IPR002401">
    <property type="entry name" value="Cyt_P450_E_grp-I"/>
</dbReference>
<dbReference type="InterPro" id="IPR036396">
    <property type="entry name" value="Cyt_P450_sf"/>
</dbReference>
<dbReference type="InterPro" id="IPR050121">
    <property type="entry name" value="Cytochrome_P450_monoxygenase"/>
</dbReference>
<dbReference type="PANTHER" id="PTHR24305">
    <property type="entry name" value="CYTOCHROME P450"/>
    <property type="match status" value="1"/>
</dbReference>
<dbReference type="PANTHER" id="PTHR24305:SF210">
    <property type="entry name" value="CYTOCHROME P450 MONOOXYGENASE ASQL-RELATED"/>
    <property type="match status" value="1"/>
</dbReference>
<dbReference type="Pfam" id="PF00067">
    <property type="entry name" value="p450"/>
    <property type="match status" value="2"/>
</dbReference>
<dbReference type="PRINTS" id="PR00463">
    <property type="entry name" value="EP450I"/>
</dbReference>
<dbReference type="PRINTS" id="PR00385">
    <property type="entry name" value="P450"/>
</dbReference>
<dbReference type="SUPFAM" id="SSF48264">
    <property type="entry name" value="Cytochrome P450"/>
    <property type="match status" value="1"/>
</dbReference>
<dbReference type="PROSITE" id="PS00086">
    <property type="entry name" value="CYTOCHROME_P450"/>
    <property type="match status" value="1"/>
</dbReference>
<protein>
    <recommendedName>
        <fullName evidence="4">Cytochrome P450 monooxygenase poxC</fullName>
        <ecNumber evidence="6">1.-.-.-</ecNumber>
    </recommendedName>
    <alternativeName>
        <fullName evidence="4">Oxaleimides biosynthesis cluster protein C</fullName>
    </alternativeName>
</protein>
<accession>S8B3I0</accession>
<sequence>MSEIIESTVAFLIGLLKASWTRTAWHFAVLSFVYVIARSIYRVWFHPLSSYPGPKLAALTQLWYARHWMGGRYPFAIEEAHRRYGEVVRIAPNELSFNTAQSFNEIYGHTTKDHKPFIKGTFYEHYQPEPGIVAERNPEKHRETRKLLAHGFSARALKAQESIIAQYSDLFLAQVKKLAKSHFWIDTIHDAGILVTLFEIGRRLPLLWPLILFSLPNGIKKKFDLFLKYSRDLVRTRVARQNTLTREDFFARLLADKSHSQSEEWLLAQANVLVIAGSDTTATALTTLIYYLAAHQDKLWHLQQELRETFDEASDMTSEKLQGMLYLNAVIEEGLRICPPTAFGLPRISPGAMVDGRLIPKGTVVSTSSWTTAHREDYFHDARGFHPERWLPAGHALWNAKFQHDHLSASKPFSLGPRGCLGVNLAYMEMRITLAKLAWKFDWELVNADQLDWESELRFEGFWKLPVPRVRFYCIHV</sequence>
<evidence type="ECO:0000250" key="1">
    <source>
        <dbReference type="UniProtKB" id="P04798"/>
    </source>
</evidence>
<evidence type="ECO:0000255" key="2"/>
<evidence type="ECO:0000269" key="3">
    <source>
    </source>
</evidence>
<evidence type="ECO:0000303" key="4">
    <source>
    </source>
</evidence>
<evidence type="ECO:0000305" key="5"/>
<evidence type="ECO:0000305" key="6">
    <source>
    </source>
</evidence>
<evidence type="ECO:0000305" key="7">
    <source>
    </source>
</evidence>
<gene>
    <name evidence="4" type="primary">poxC</name>
    <name type="ORF">PDE_04015</name>
</gene>
<reference key="1">
    <citation type="journal article" date="2013" name="PLoS ONE">
        <title>Genomic and secretomic analyses reveal unique features of the lignocellulolytic enzyme system of Penicillium decumbens.</title>
        <authorList>
            <person name="Liu G."/>
            <person name="Zhang L."/>
            <person name="Wei X."/>
            <person name="Zou G."/>
            <person name="Qin Y."/>
            <person name="Ma L."/>
            <person name="Li J."/>
            <person name="Zheng H."/>
            <person name="Wang S."/>
            <person name="Wang C."/>
            <person name="Xun L."/>
            <person name="Zhao G.-P."/>
            <person name="Zhou Z."/>
            <person name="Qu Y."/>
        </authorList>
    </citation>
    <scope>NUCLEOTIDE SEQUENCE [LARGE SCALE GENOMIC DNA]</scope>
    <source>
        <strain>114-2 / CGMCC 5302</strain>
    </source>
</reference>
<reference key="2">
    <citation type="journal article" date="2017" name="J. Am. Chem. Soc.">
        <title>Collaborative Biosynthesis of Maleimide- and Succinimide-Containing Natural Products by Fungal Polyketide Megasynthases.</title>
        <authorList>
            <person name="Sato M."/>
            <person name="Dander J.E."/>
            <person name="Sato C."/>
            <person name="Hung Y.S."/>
            <person name="Gao S.S."/>
            <person name="Tang M.C."/>
            <person name="Hang L."/>
            <person name="Winter J.M."/>
            <person name="Garg N.K."/>
            <person name="Watanabe K."/>
            <person name="Tang Y."/>
        </authorList>
    </citation>
    <scope>FUNCTION</scope>
    <scope>INDUCTION</scope>
    <scope>PATHWAY</scope>
</reference>
<reference key="3">
    <citation type="journal article" date="2020" name="Chem. Commun. (Camb.)">
        <title>Evidence for enzyme catalysed intramolecular [4+2] Diels-Alder cyclization during the biosynthesis of pyrichalasin H.</title>
        <authorList>
            <person name="Hantke V."/>
            <person name="Skellam E.J."/>
            <person name="Cox R.J."/>
        </authorList>
    </citation>
    <scope>FUNCTION</scope>
</reference>
<comment type="function">
    <text evidence="3 7">Cytochrome P450 monooxygenase; part of the gene cluster that mediates the biosynthesis of oxaleimides, cytotoxic compounds containing an unusual disubstituted succinimide moiety (PubMed:28365998). The first step of the pathway is provided by the HR-PKS poxF that serves in a new mode of collaborative biosynthesis with the PKS-NRPS poxE, by providing the olefin containing amino acid substrate via the synthesis of an ACP-bound dec-4-enoate (PubMed:28365998). The cytochrome P450 monooxygenase poxM-catalyzed oxidation at the alpha-position creates the enzyme-bound 2-hydroxydec-4-enoyl-ACP thioester, which may be prone to spontaneous hydrolysis to yield 2-hydroxydec-4-enoic acid due to increased electrophilicity of the carbonyl (PubMed:28365998). 2-hydroxydec-4-enoic acid can then be further oxidized by poxM to yield the alpha-ketoacid 2-oxodec-4-enoicacid, which is reductively aminated by the aminotransferase poxL to yield (S,E)-2-aminodec-4-enoic acid (PubMed:28365998). The Hybrid PKS-NRPS synthetase poxE then performs condensation between the octaketide product of its PKS modules and the amino group of (S,E)-2-aminodec-4-enoic acid which is activated and incorporated by the adenylation domain (PubMed:28365998). The resulting aminoacyl product can be cyclized by the Diels-Alderase PoxQ and reductively released by the reductive (R) domain of poxE to yield an aldehyde intermediate (Probable) (PubMed:28365998). The released aldehyde is then substrate for a Knoevenagel condensation by the hydrolyase poxO followed by an oxidation at the 5-position of the pyrrolidone ring (PubMed:28365998). The presence of the olefin from the amino acid building block allows for migration of the substituted allyl group to occur (PubMed:28365998). This allylic transposition reaction takes place in a conjugate addition, semipinacol-like fashion to yield a succinimide intermediate (PubMed:28365998). Iterative two-electron oxidations of the C7 methyl of the succinimide intermediate to the carboxylic acid can be catalyzed by one of two remaining cytochrome P450 monooxygenasess poxC or poxD to yield oxaleimide A (PubMed:28365998). Subsequent oxidation yields the maleimide scaffold oxaleimide I (PubMed:28365998). Both oxaleimide A and oxaleimide I can undergo oxidative modifications in the decalin ring to yield the series of products oxaleimides B to H (PubMed:28365998).</text>
</comment>
<comment type="cofactor">
    <cofactor evidence="1">
        <name>heme</name>
        <dbReference type="ChEBI" id="CHEBI:30413"/>
    </cofactor>
</comment>
<comment type="pathway">
    <text evidence="6">Secondary metabolite biosynthesis.</text>
</comment>
<comment type="subcellular location">
    <subcellularLocation>
        <location evidence="2">Membrane</location>
        <topology evidence="2">Single-pass membrane protein</topology>
    </subcellularLocation>
</comment>
<comment type="induction">
    <text evidence="3">Expression is positively regulated by the oxaleimides biosynthesis cluster-specific transcription factor poxB.</text>
</comment>
<comment type="similarity">
    <text evidence="5">Belongs to the cytochrome P450 family.</text>
</comment>
<feature type="chain" id="PRO_0000453762" description="Cytochrome P450 monooxygenase poxC">
    <location>
        <begin position="1"/>
        <end position="477"/>
    </location>
</feature>
<feature type="transmembrane region" description="Helical" evidence="2">
    <location>
        <begin position="24"/>
        <end position="41"/>
    </location>
</feature>
<feature type="binding site" description="axial binding residue" evidence="1">
    <location>
        <position position="420"/>
    </location>
    <ligand>
        <name>heme</name>
        <dbReference type="ChEBI" id="CHEBI:30413"/>
    </ligand>
    <ligandPart>
        <name>Fe</name>
        <dbReference type="ChEBI" id="CHEBI:18248"/>
    </ligandPart>
</feature>
<organism>
    <name type="scientific">Penicillium oxalicum (strain 114-2 / CGMCC 5302)</name>
    <name type="common">Penicillium decumbens</name>
    <dbReference type="NCBI Taxonomy" id="933388"/>
    <lineage>
        <taxon>Eukaryota</taxon>
        <taxon>Fungi</taxon>
        <taxon>Dikarya</taxon>
        <taxon>Ascomycota</taxon>
        <taxon>Pezizomycotina</taxon>
        <taxon>Eurotiomycetes</taxon>
        <taxon>Eurotiomycetidae</taxon>
        <taxon>Eurotiales</taxon>
        <taxon>Aspergillaceae</taxon>
        <taxon>Penicillium</taxon>
    </lineage>
</organism>